<reference key="1">
    <citation type="journal article" date="1999" name="Nature">
        <title>Sequence and analysis of chromosome 2 of the plant Arabidopsis thaliana.</title>
        <authorList>
            <person name="Lin X."/>
            <person name="Kaul S."/>
            <person name="Rounsley S.D."/>
            <person name="Shea T.P."/>
            <person name="Benito M.-I."/>
            <person name="Town C.D."/>
            <person name="Fujii C.Y."/>
            <person name="Mason T.M."/>
            <person name="Bowman C.L."/>
            <person name="Barnstead M.E."/>
            <person name="Feldblyum T.V."/>
            <person name="Buell C.R."/>
            <person name="Ketchum K.A."/>
            <person name="Lee J.J."/>
            <person name="Ronning C.M."/>
            <person name="Koo H.L."/>
            <person name="Moffat K.S."/>
            <person name="Cronin L.A."/>
            <person name="Shen M."/>
            <person name="Pai G."/>
            <person name="Van Aken S."/>
            <person name="Umayam L."/>
            <person name="Tallon L.J."/>
            <person name="Gill J.E."/>
            <person name="Adams M.D."/>
            <person name="Carrera A.J."/>
            <person name="Creasy T.H."/>
            <person name="Goodman H.M."/>
            <person name="Somerville C.R."/>
            <person name="Copenhaver G.P."/>
            <person name="Preuss D."/>
            <person name="Nierman W.C."/>
            <person name="White O."/>
            <person name="Eisen J.A."/>
            <person name="Salzberg S.L."/>
            <person name="Fraser C.M."/>
            <person name="Venter J.C."/>
        </authorList>
    </citation>
    <scope>NUCLEOTIDE SEQUENCE [LARGE SCALE GENOMIC DNA]</scope>
    <source>
        <strain>cv. Columbia</strain>
    </source>
</reference>
<reference key="2">
    <citation type="journal article" date="2017" name="Plant J.">
        <title>Araport11: a complete reannotation of the Arabidopsis thaliana reference genome.</title>
        <authorList>
            <person name="Cheng C.Y."/>
            <person name="Krishnakumar V."/>
            <person name="Chan A.P."/>
            <person name="Thibaud-Nissen F."/>
            <person name="Schobel S."/>
            <person name="Town C.D."/>
        </authorList>
    </citation>
    <scope>GENOME REANNOTATION</scope>
    <source>
        <strain>cv. Columbia</strain>
    </source>
</reference>
<reference key="3">
    <citation type="journal article" date="2006" name="Plant Biotechnol. J.">
        <title>Simultaneous high-throughput recombinational cloning of open reading frames in closed and open configurations.</title>
        <authorList>
            <person name="Underwood B.A."/>
            <person name="Vanderhaeghen R."/>
            <person name="Whitford R."/>
            <person name="Town C.D."/>
            <person name="Hilson P."/>
        </authorList>
    </citation>
    <scope>NUCLEOTIDE SEQUENCE [LARGE SCALE GENOMIC DNA]</scope>
    <source>
        <strain>cv. Columbia</strain>
    </source>
</reference>
<reference key="4">
    <citation type="submission" date="2005-03" db="EMBL/GenBank/DDBJ databases">
        <authorList>
            <person name="Underwood B.A."/>
            <person name="Xiao Y.-L."/>
            <person name="Moskal W.A. Jr."/>
            <person name="Monaghan E.L."/>
            <person name="Wang W."/>
            <person name="Redman J.C."/>
            <person name="Wu H.C."/>
            <person name="Utterback T."/>
            <person name="Town C.D."/>
        </authorList>
    </citation>
    <scope>NUCLEOTIDE SEQUENCE [LARGE SCALE GENOMIC DNA]</scope>
    <source>
        <strain>cv. Columbia</strain>
    </source>
</reference>
<reference key="5">
    <citation type="journal article" date="2003" name="Science">
        <title>Empirical analysis of transcriptional activity in the Arabidopsis genome.</title>
        <authorList>
            <person name="Yamada K."/>
            <person name="Lim J."/>
            <person name="Dale J.M."/>
            <person name="Chen H."/>
            <person name="Shinn P."/>
            <person name="Palm C.J."/>
            <person name="Southwick A.M."/>
            <person name="Wu H.C."/>
            <person name="Kim C.J."/>
            <person name="Nguyen M."/>
            <person name="Pham P.K."/>
            <person name="Cheuk R.F."/>
            <person name="Karlin-Newmann G."/>
            <person name="Liu S.X."/>
            <person name="Lam B."/>
            <person name="Sakano H."/>
            <person name="Wu T."/>
            <person name="Yu G."/>
            <person name="Miranda M."/>
            <person name="Quach H.L."/>
            <person name="Tripp M."/>
            <person name="Chang C.H."/>
            <person name="Lee J.M."/>
            <person name="Toriumi M.J."/>
            <person name="Chan M.M."/>
            <person name="Tang C.C."/>
            <person name="Onodera C.S."/>
            <person name="Deng J.M."/>
            <person name="Akiyama K."/>
            <person name="Ansari Y."/>
            <person name="Arakawa T."/>
            <person name="Banh J."/>
            <person name="Banno F."/>
            <person name="Bowser L."/>
            <person name="Brooks S.Y."/>
            <person name="Carninci P."/>
            <person name="Chao Q."/>
            <person name="Choy N."/>
            <person name="Enju A."/>
            <person name="Goldsmith A.D."/>
            <person name="Gurjal M."/>
            <person name="Hansen N.F."/>
            <person name="Hayashizaki Y."/>
            <person name="Johnson-Hopson C."/>
            <person name="Hsuan V.W."/>
            <person name="Iida K."/>
            <person name="Karnes M."/>
            <person name="Khan S."/>
            <person name="Koesema E."/>
            <person name="Ishida J."/>
            <person name="Jiang P.X."/>
            <person name="Jones T."/>
            <person name="Kawai J."/>
            <person name="Kamiya A."/>
            <person name="Meyers C."/>
            <person name="Nakajima M."/>
            <person name="Narusaka M."/>
            <person name="Seki M."/>
            <person name="Sakurai T."/>
            <person name="Satou M."/>
            <person name="Tamse R."/>
            <person name="Vaysberg M."/>
            <person name="Wallender E.K."/>
            <person name="Wong C."/>
            <person name="Yamamura Y."/>
            <person name="Yuan S."/>
            <person name="Shinozaki K."/>
            <person name="Davis R.W."/>
            <person name="Theologis A."/>
            <person name="Ecker J.R."/>
        </authorList>
    </citation>
    <scope>NUCLEOTIDE SEQUENCE [LARGE SCALE MRNA]</scope>
    <source>
        <strain>cv. Columbia</strain>
    </source>
</reference>
<reference key="6">
    <citation type="journal article" date="2005" name="Plant Physiol.">
        <title>Analysis of the cDNAs of hypothetical genes on Arabidopsis chromosome 2 reveals numerous transcript variants.</title>
        <authorList>
            <person name="Xiao Y.-L."/>
            <person name="Smith S.R."/>
            <person name="Ishmael N."/>
            <person name="Redman J.C."/>
            <person name="Kumar N."/>
            <person name="Monaghan E.L."/>
            <person name="Ayele M."/>
            <person name="Haas B.J."/>
            <person name="Wu H.C."/>
            <person name="Town C.D."/>
        </authorList>
    </citation>
    <scope>NUCLEOTIDE SEQUENCE [LARGE SCALE MRNA]</scope>
    <source>
        <strain>cv. Columbia</strain>
    </source>
</reference>
<feature type="chain" id="PRO_0000283375" description="F-box protein At2g14290">
    <location>
        <begin position="1"/>
        <end position="353"/>
    </location>
</feature>
<feature type="domain" description="F-box">
    <location>
        <begin position="6"/>
        <end position="58"/>
    </location>
</feature>
<name>FB102_ARATH</name>
<keyword id="KW-1185">Reference proteome</keyword>
<protein>
    <recommendedName>
        <fullName>F-box protein At2g14290</fullName>
    </recommendedName>
</protein>
<sequence>MGTPNPRTWSELPPDLLGSIFHRLSFTDFHRAKIVCWNWNLSSKLTVPKKIRSPWLMLFPEGDNEDGSVLLFNPEEEEKIYKTKRYFSGIRFLANSGKWFLLIDSLFNLYIIDVFSENKIDLLPLEESLLDKEESEDLTGLLWVDEKTAEYVVVLFFNFPSGNVGFCKKGDDHYTKIPLHCGVPWRLQGLIDAVLLGYRLYIRTELSYIRILDLSTQQGFEDVNKYEPFQVFSSTQDCSIAVTTRGEVLLVKSILDNTTIGSHRRFCIFKNIDYNPQEEVDSLGDEALLLNLGILLPSIAPNSIYFTRHGRIYHKEHFNLDLCVFNLETKTLKRFPSLANMKLKDAQWFFPGI</sequence>
<dbReference type="EMBL" id="AC006304">
    <property type="protein sequence ID" value="AAD20108.1"/>
    <property type="molecule type" value="Genomic_DNA"/>
</dbReference>
<dbReference type="EMBL" id="CP002685">
    <property type="protein sequence ID" value="AEC06300.1"/>
    <property type="molecule type" value="Genomic_DNA"/>
</dbReference>
<dbReference type="EMBL" id="DQ487534">
    <property type="protein sequence ID" value="ABF59348.1"/>
    <property type="molecule type" value="Genomic_DNA"/>
</dbReference>
<dbReference type="EMBL" id="AY954785">
    <property type="protein sequence ID" value="AAX55111.1"/>
    <property type="molecule type" value="Genomic_DNA"/>
</dbReference>
<dbReference type="EMBL" id="AF370584">
    <property type="protein sequence ID" value="AAK43903.1"/>
    <property type="molecule type" value="mRNA"/>
</dbReference>
<dbReference type="EMBL" id="AY234414">
    <property type="protein sequence ID" value="AAO92058.1"/>
    <property type="molecule type" value="mRNA"/>
</dbReference>
<dbReference type="PIR" id="G84515">
    <property type="entry name" value="G84515"/>
</dbReference>
<dbReference type="RefSeq" id="NP_179039.1">
    <property type="nucleotide sequence ID" value="NM_126996.3"/>
</dbReference>
<dbReference type="BioGRID" id="1276">
    <property type="interactions" value="1"/>
</dbReference>
<dbReference type="FunCoup" id="Q9ZQ60">
    <property type="interactions" value="33"/>
</dbReference>
<dbReference type="STRING" id="3702.Q9ZQ60"/>
<dbReference type="iPTMnet" id="Q9ZQ60"/>
<dbReference type="PaxDb" id="3702-AT2G14290.1"/>
<dbReference type="EnsemblPlants" id="AT2G14290.1">
    <property type="protein sequence ID" value="AT2G14290.1"/>
    <property type="gene ID" value="AT2G14290"/>
</dbReference>
<dbReference type="GeneID" id="815916"/>
<dbReference type="Gramene" id="AT2G14290.1">
    <property type="protein sequence ID" value="AT2G14290.1"/>
    <property type="gene ID" value="AT2G14290"/>
</dbReference>
<dbReference type="KEGG" id="ath:AT2G14290"/>
<dbReference type="Araport" id="AT2G14290"/>
<dbReference type="TAIR" id="AT2G14290">
    <property type="gene designation" value="ATFDB13"/>
</dbReference>
<dbReference type="eggNOG" id="ENOG502R281">
    <property type="taxonomic scope" value="Eukaryota"/>
</dbReference>
<dbReference type="HOGENOM" id="CLU_019286_7_1_1"/>
<dbReference type="InParanoid" id="Q9ZQ60"/>
<dbReference type="OMA" id="RSDLYMV"/>
<dbReference type="PhylomeDB" id="Q9ZQ60"/>
<dbReference type="PRO" id="PR:Q9ZQ60"/>
<dbReference type="Proteomes" id="UP000006548">
    <property type="component" value="Chromosome 2"/>
</dbReference>
<dbReference type="ExpressionAtlas" id="Q9ZQ60">
    <property type="expression patterns" value="baseline and differential"/>
</dbReference>
<dbReference type="Gene3D" id="1.20.1280.50">
    <property type="match status" value="1"/>
</dbReference>
<dbReference type="InterPro" id="IPR036047">
    <property type="entry name" value="F-box-like_dom_sf"/>
</dbReference>
<dbReference type="InterPro" id="IPR050942">
    <property type="entry name" value="F-box_BR-signaling"/>
</dbReference>
<dbReference type="InterPro" id="IPR001810">
    <property type="entry name" value="F-box_dom"/>
</dbReference>
<dbReference type="InterPro" id="IPR005174">
    <property type="entry name" value="KIB1-4_b-propeller"/>
</dbReference>
<dbReference type="PANTHER" id="PTHR44259:SF31">
    <property type="entry name" value="F-BOX FAMILY PROTEIN"/>
    <property type="match status" value="1"/>
</dbReference>
<dbReference type="PANTHER" id="PTHR44259">
    <property type="entry name" value="OS07G0183000 PROTEIN-RELATED"/>
    <property type="match status" value="1"/>
</dbReference>
<dbReference type="Pfam" id="PF03478">
    <property type="entry name" value="Beta-prop_KIB1-4"/>
    <property type="match status" value="1"/>
</dbReference>
<dbReference type="Pfam" id="PF00646">
    <property type="entry name" value="F-box"/>
    <property type="match status" value="1"/>
</dbReference>
<dbReference type="SUPFAM" id="SSF81383">
    <property type="entry name" value="F-box domain"/>
    <property type="match status" value="1"/>
</dbReference>
<accession>Q9ZQ60</accession>
<organism>
    <name type="scientific">Arabidopsis thaliana</name>
    <name type="common">Mouse-ear cress</name>
    <dbReference type="NCBI Taxonomy" id="3702"/>
    <lineage>
        <taxon>Eukaryota</taxon>
        <taxon>Viridiplantae</taxon>
        <taxon>Streptophyta</taxon>
        <taxon>Embryophyta</taxon>
        <taxon>Tracheophyta</taxon>
        <taxon>Spermatophyta</taxon>
        <taxon>Magnoliopsida</taxon>
        <taxon>eudicotyledons</taxon>
        <taxon>Gunneridae</taxon>
        <taxon>Pentapetalae</taxon>
        <taxon>rosids</taxon>
        <taxon>malvids</taxon>
        <taxon>Brassicales</taxon>
        <taxon>Brassicaceae</taxon>
        <taxon>Camelineae</taxon>
        <taxon>Arabidopsis</taxon>
    </lineage>
</organism>
<proteinExistence type="evidence at transcript level"/>
<gene>
    <name type="ordered locus">At2g14290</name>
    <name type="ORF">T1O16.12</name>
</gene>